<gene>
    <name type="primary">GPI7</name>
    <name type="synonym">LAS21</name>
    <name type="ordered locus">CAALFM_C105070CA</name>
    <name type="ORF">CaO19.11547</name>
    <name type="ORF">CaO19.4064</name>
</gene>
<organism>
    <name type="scientific">Candida albicans (strain SC5314 / ATCC MYA-2876)</name>
    <name type="common">Yeast</name>
    <dbReference type="NCBI Taxonomy" id="237561"/>
    <lineage>
        <taxon>Eukaryota</taxon>
        <taxon>Fungi</taxon>
        <taxon>Dikarya</taxon>
        <taxon>Ascomycota</taxon>
        <taxon>Saccharomycotina</taxon>
        <taxon>Pichiomycetes</taxon>
        <taxon>Debaryomycetaceae</taxon>
        <taxon>Candida/Lodderomyces clade</taxon>
        <taxon>Candida</taxon>
    </lineage>
</organism>
<evidence type="ECO:0000250" key="1"/>
<evidence type="ECO:0000255" key="2"/>
<evidence type="ECO:0000255" key="3">
    <source>
        <dbReference type="PROSITE-ProRule" id="PRU00498"/>
    </source>
</evidence>
<evidence type="ECO:0000269" key="4">
    <source>
    </source>
</evidence>
<evidence type="ECO:0000305" key="5"/>
<sequence length="885" mass="100727">MSGSLNSRWVVQVSLTIINIIGFLVFLRGFFPSKVVLPGFNSFQDSTKSPFSDQYGNPQFNKFILMVVDAMRSDFCFSDRSNFSFLHQLINQGRALPFTAFSNPPTVTLPRLKGITTGGTPNFLDAILNVADDQDDSQGLHNQDSWVHQFRHSNNKTINFFGDDTWLKLFQDQFTEFEGTNSFFVSDFTEVDNNVTRHLDDQLSSNKWDGLILHYLGLDHIGHKGGPESPYMKPKQIEMDKILQRLYTYVTKNDDTLIVLMGDHGMNEIGNHGGSSPGETSAALSFISPKFNHKGESPLPYNSDYSYHHKISQIDLVPTLAALLNFPIPKNSLGVIAKEILEIWPENQRIKILLENCAQIMNLYEAKYGPSGKVWSQWENLQAKQHPIADYYEFLQDIQSEMASSATNYGYKDIYAGALILVITALAVIVVFNRYFLTASNMNISSVMFYELFVVLYSLHFHGSSLIEEEHQIWYFFTTATLLFLAITFFDTFKSLQNFISFGVLFACIRFMRSWNNSGQKYSSQYNIAYYLSHSNPNLMWGLIILTYFVLTLCIYIQGSLVPTFAFSFGKRLPDVKDPGGLISFIVVFVATSVSFSFKLLQYYIDGNTIPKWLNRFLLWIIESHHIDLSSATLEDNELKFQLQSVSIQLSKFTTIILLLLVISRVIIGKIRKIRYGTITDITNIMTIYLIHQTRHENIPIFLALMFAKFALSKLIYRKTNRIDQYILTVTMTVLCLQNLTFFCMGNTNSLATVDLSNAYNGVKAYNVFLVGLLTFVSNFAGPIFWSLSGLQLLYEPSLLNFNGPATTDLLHYTGLKKSILLVKSLISLFFYTVSAVNLVGSCINLRFHLFIWTVFSPKLLFFGSWILFVNVLIDLILAVIVLLF</sequence>
<protein>
    <recommendedName>
        <fullName>GPI ethanolamine phosphate transferase 2</fullName>
        <ecNumber>2.-.-.-</ecNumber>
    </recommendedName>
    <alternativeName>
        <fullName>Glycosylphosphatidylinositol-anchor biosynthesis protein 7</fullName>
    </alternativeName>
</protein>
<feature type="chain" id="PRO_0000246193" description="GPI ethanolamine phosphate transferase 2">
    <location>
        <begin position="1"/>
        <end position="885"/>
    </location>
</feature>
<feature type="transmembrane region" description="Helical" evidence="2">
    <location>
        <begin position="413"/>
        <end position="433"/>
    </location>
</feature>
<feature type="transmembrane region" description="Helical" evidence="2">
    <location>
        <begin position="447"/>
        <end position="467"/>
    </location>
</feature>
<feature type="transmembrane region" description="Helical" evidence="2">
    <location>
        <begin position="473"/>
        <end position="493"/>
    </location>
</feature>
<feature type="transmembrane region" description="Helical" evidence="2">
    <location>
        <begin position="495"/>
        <end position="514"/>
    </location>
</feature>
<feature type="transmembrane region" description="Helical" evidence="2">
    <location>
        <begin position="539"/>
        <end position="559"/>
    </location>
</feature>
<feature type="transmembrane region" description="Helical" evidence="2">
    <location>
        <begin position="581"/>
        <end position="601"/>
    </location>
</feature>
<feature type="transmembrane region" description="Helical" evidence="2">
    <location>
        <begin position="648"/>
        <end position="668"/>
    </location>
</feature>
<feature type="transmembrane region" description="Helical" evidence="2">
    <location>
        <begin position="697"/>
        <end position="717"/>
    </location>
</feature>
<feature type="transmembrane region" description="Helical" evidence="2">
    <location>
        <begin position="726"/>
        <end position="746"/>
    </location>
</feature>
<feature type="transmembrane region" description="Helical" evidence="2">
    <location>
        <begin position="768"/>
        <end position="788"/>
    </location>
</feature>
<feature type="transmembrane region" description="Helical" evidence="2">
    <location>
        <begin position="820"/>
        <end position="840"/>
    </location>
</feature>
<feature type="transmembrane region" description="Helical" evidence="2">
    <location>
        <begin position="865"/>
        <end position="885"/>
    </location>
</feature>
<feature type="glycosylation site" description="N-linked (GlcNAc...) asparagine" evidence="3">
    <location>
        <position position="82"/>
    </location>
</feature>
<feature type="glycosylation site" description="N-linked (GlcNAc...) asparagine" evidence="3">
    <location>
        <position position="155"/>
    </location>
</feature>
<feature type="glycosylation site" description="N-linked (GlcNAc...) asparagine" evidence="3">
    <location>
        <position position="194"/>
    </location>
</feature>
<feature type="glycosylation site" description="N-linked (GlcNAc...) asparagine" evidence="3">
    <location>
        <position position="443"/>
    </location>
</feature>
<feature type="glycosylation site" description="N-linked (GlcNAc...) asparagine" evidence="3">
    <location>
        <position position="516"/>
    </location>
</feature>
<feature type="sequence conflict" description="In Ref. 1; AAL83897." evidence="5" ref="1">
    <original>Q</original>
    <variation>H</variation>
    <location>
        <position position="54"/>
    </location>
</feature>
<feature type="sequence conflict" description="In Ref. 1; AAL83897." evidence="5" ref="1">
    <original>N</original>
    <variation>T</variation>
    <location>
        <position position="57"/>
    </location>
</feature>
<feature type="sequence conflict" description="In Ref. 1; AAL83897." evidence="5" ref="1">
    <original>R</original>
    <variation>H</variation>
    <location>
        <position position="94"/>
    </location>
</feature>
<feature type="sequence conflict" description="In Ref. 1; AAL83897." evidence="5" ref="1">
    <original>K</original>
    <variation>E</variation>
    <location>
        <position position="373"/>
    </location>
</feature>
<feature type="sequence conflict" description="In Ref. 1; AAL83897." evidence="5" ref="1">
    <original>S</original>
    <variation>T</variation>
    <location>
        <position position="376"/>
    </location>
</feature>
<feature type="sequence conflict" description="In Ref. 1; AAL83897." evidence="5" ref="1">
    <original>A</original>
    <variation>V</variation>
    <location>
        <position position="425"/>
    </location>
</feature>
<feature type="sequence conflict" description="In Ref. 1; AAL83897." evidence="5" ref="1">
    <original>ILAVIVLLF</original>
    <variation>YFGNNSIVVLKTNILL</variation>
    <location>
        <begin position="877"/>
        <end position="885"/>
    </location>
</feature>
<comment type="function">
    <text evidence="1">Ethanolamine phosphate transferase involved in glycosylphosphatidylinositol-anchor biosynthesis. Transfers ethanolamine phosphate to the GPI second mannose (By similarity).</text>
</comment>
<comment type="pathway">
    <text>Glycolipid biosynthesis; glycosylphosphatidylinositol-anchor biosynthesis.</text>
</comment>
<comment type="subcellular location">
    <subcellularLocation>
        <location evidence="1">Endoplasmic reticulum membrane</location>
        <topology evidence="1">Multi-pass membrane protein</topology>
    </subcellularLocation>
</comment>
<comment type="disruption phenotype">
    <text evidence="4">Cell-wall protein anchorage defects.</text>
</comment>
<comment type="similarity">
    <text evidence="5">Belongs to the PIGG/PIGN/PIGO family. PIGG subfamily.</text>
</comment>
<keyword id="KW-0256">Endoplasmic reticulum</keyword>
<keyword id="KW-0325">Glycoprotein</keyword>
<keyword id="KW-0337">GPI-anchor biosynthesis</keyword>
<keyword id="KW-0472">Membrane</keyword>
<keyword id="KW-1185">Reference proteome</keyword>
<keyword id="KW-0808">Transferase</keyword>
<keyword id="KW-0812">Transmembrane</keyword>
<keyword id="KW-1133">Transmembrane helix</keyword>
<accession>Q8TGB2</accession>
<accession>A0A1D8PDH8</accession>
<accession>Q59LX3</accession>
<name>GPI7_CANAL</name>
<reference key="1">
    <citation type="journal article" date="2002" name="Mol. Microbiol.">
        <title>Complete glycosylphosphatidylinositol anchors are required in Candida albicans for full morphogenesis, virulence and resistance to macrophages.</title>
        <authorList>
            <person name="Richard M."/>
            <person name="Ibata-Ombetta S."/>
            <person name="Dromer F."/>
            <person name="Bordon-Pallier F."/>
            <person name="Jouault T."/>
            <person name="Gaillardin C."/>
        </authorList>
    </citation>
    <scope>NUCLEOTIDE SEQUENCE [GENOMIC DNA]</scope>
    <source>
        <strain>SC5314 / ATCC MYA-2876</strain>
    </source>
</reference>
<reference key="2">
    <citation type="journal article" date="2004" name="Proc. Natl. Acad. Sci. U.S.A.">
        <title>The diploid genome sequence of Candida albicans.</title>
        <authorList>
            <person name="Jones T."/>
            <person name="Federspiel N.A."/>
            <person name="Chibana H."/>
            <person name="Dungan J."/>
            <person name="Kalman S."/>
            <person name="Magee B.B."/>
            <person name="Newport G."/>
            <person name="Thorstenson Y.R."/>
            <person name="Agabian N."/>
            <person name="Magee P.T."/>
            <person name="Davis R.W."/>
            <person name="Scherer S."/>
        </authorList>
    </citation>
    <scope>NUCLEOTIDE SEQUENCE [LARGE SCALE GENOMIC DNA]</scope>
    <source>
        <strain>SC5314 / ATCC MYA-2876</strain>
    </source>
</reference>
<reference key="3">
    <citation type="journal article" date="2007" name="Genome Biol.">
        <title>Assembly of the Candida albicans genome into sixteen supercontigs aligned on the eight chromosomes.</title>
        <authorList>
            <person name="van het Hoog M."/>
            <person name="Rast T.J."/>
            <person name="Martchenko M."/>
            <person name="Grindle S."/>
            <person name="Dignard D."/>
            <person name="Hogues H."/>
            <person name="Cuomo C."/>
            <person name="Berriman M."/>
            <person name="Scherer S."/>
            <person name="Magee B.B."/>
            <person name="Whiteway M."/>
            <person name="Chibana H."/>
            <person name="Nantel A."/>
            <person name="Magee P.T."/>
        </authorList>
    </citation>
    <scope>GENOME REANNOTATION</scope>
    <source>
        <strain>SC5314 / ATCC MYA-2876</strain>
    </source>
</reference>
<reference key="4">
    <citation type="journal article" date="2013" name="Genome Biol.">
        <title>Assembly of a phased diploid Candida albicans genome facilitates allele-specific measurements and provides a simple model for repeat and indel structure.</title>
        <authorList>
            <person name="Muzzey D."/>
            <person name="Schwartz K."/>
            <person name="Weissman J.S."/>
            <person name="Sherlock G."/>
        </authorList>
    </citation>
    <scope>NUCLEOTIDE SEQUENCE [LARGE SCALE GENOMIC DNA]</scope>
    <scope>GENOME REANNOTATION</scope>
    <source>
        <strain>SC5314 / ATCC MYA-2876</strain>
    </source>
</reference>
<reference key="5">
    <citation type="journal article" date="2002" name="Microbiology">
        <title>GPI7 affects cell-wall protein anchorage in Saccharomyces cerevisiae and Candida albicans.</title>
        <authorList>
            <person name="Richard M."/>
            <person name="De Groot P."/>
            <person name="Courtin O."/>
            <person name="Poulain D."/>
            <person name="Klis F."/>
            <person name="Gaillardin C."/>
        </authorList>
    </citation>
    <scope>DISRUPTION PHENOTYPE</scope>
</reference>
<dbReference type="EC" id="2.-.-.-"/>
<dbReference type="EMBL" id="AF348498">
    <property type="protein sequence ID" value="AAL83897.1"/>
    <property type="molecule type" value="Genomic_DNA"/>
</dbReference>
<dbReference type="EMBL" id="CP017623">
    <property type="protein sequence ID" value="AOW26178.1"/>
    <property type="molecule type" value="Genomic_DNA"/>
</dbReference>
<dbReference type="RefSeq" id="XP_710733.2">
    <property type="nucleotide sequence ID" value="XM_705641.2"/>
</dbReference>
<dbReference type="SMR" id="Q8TGB2"/>
<dbReference type="FunCoup" id="Q8TGB2">
    <property type="interactions" value="480"/>
</dbReference>
<dbReference type="STRING" id="237561.Q8TGB2"/>
<dbReference type="GlyCosmos" id="Q8TGB2">
    <property type="glycosylation" value="5 sites, No reported glycans"/>
</dbReference>
<dbReference type="EnsemblFungi" id="C1_05070C_A-T">
    <property type="protein sequence ID" value="C1_05070C_A-T-p1"/>
    <property type="gene ID" value="C1_05070C_A"/>
</dbReference>
<dbReference type="GeneID" id="3647672"/>
<dbReference type="KEGG" id="cal:CAALFM_C105070CA"/>
<dbReference type="CGD" id="CAL0000200443">
    <property type="gene designation" value="GPI7"/>
</dbReference>
<dbReference type="VEuPathDB" id="FungiDB:C1_05070C_A"/>
<dbReference type="eggNOG" id="KOG2125">
    <property type="taxonomic scope" value="Eukaryota"/>
</dbReference>
<dbReference type="HOGENOM" id="CLU_004770_3_0_1"/>
<dbReference type="InParanoid" id="Q8TGB2"/>
<dbReference type="OrthoDB" id="272139at2759"/>
<dbReference type="UniPathway" id="UPA00196"/>
<dbReference type="PHI-base" id="PHI:259"/>
<dbReference type="PRO" id="PR:Q8TGB2"/>
<dbReference type="Proteomes" id="UP000000559">
    <property type="component" value="Chromosome 1"/>
</dbReference>
<dbReference type="GO" id="GO:0005789">
    <property type="term" value="C:endoplasmic reticulum membrane"/>
    <property type="evidence" value="ECO:0000318"/>
    <property type="project" value="GO_Central"/>
</dbReference>
<dbReference type="GO" id="GO:0005886">
    <property type="term" value="C:plasma membrane"/>
    <property type="evidence" value="ECO:0007669"/>
    <property type="project" value="EnsemblFungi"/>
</dbReference>
<dbReference type="GO" id="GO:0051267">
    <property type="term" value="F:CP2 mannose-ethanolamine phosphotransferase activity"/>
    <property type="evidence" value="ECO:0000318"/>
    <property type="project" value="GO_Central"/>
</dbReference>
<dbReference type="GO" id="GO:0009267">
    <property type="term" value="P:cellular response to starvation"/>
    <property type="evidence" value="ECO:0000315"/>
    <property type="project" value="CGD"/>
</dbReference>
<dbReference type="GO" id="GO:0030447">
    <property type="term" value="P:filamentous growth"/>
    <property type="evidence" value="ECO:0000315"/>
    <property type="project" value="CGD"/>
</dbReference>
<dbReference type="GO" id="GO:0036180">
    <property type="term" value="P:filamentous growth of a population of unicellular organisms in response to biotic stimulus"/>
    <property type="evidence" value="ECO:0000315"/>
    <property type="project" value="CGD"/>
</dbReference>
<dbReference type="GO" id="GO:0036170">
    <property type="term" value="P:filamentous growth of a population of unicellular organisms in response to starvation"/>
    <property type="evidence" value="ECO:0000315"/>
    <property type="project" value="CGD"/>
</dbReference>
<dbReference type="GO" id="GO:0006506">
    <property type="term" value="P:GPI anchor biosynthetic process"/>
    <property type="evidence" value="ECO:0000318"/>
    <property type="project" value="GO_Central"/>
</dbReference>
<dbReference type="GO" id="GO:0006505">
    <property type="term" value="P:GPI anchor metabolic process"/>
    <property type="evidence" value="ECO:0000315"/>
    <property type="project" value="CGD"/>
</dbReference>
<dbReference type="CDD" id="cd16024">
    <property type="entry name" value="GPI_EPT_2"/>
    <property type="match status" value="1"/>
</dbReference>
<dbReference type="FunFam" id="3.40.720.10:FF:000045">
    <property type="entry name" value="GPI ethanolamine phosphate transferase 2"/>
    <property type="match status" value="1"/>
</dbReference>
<dbReference type="Gene3D" id="3.40.720.10">
    <property type="entry name" value="Alkaline Phosphatase, subunit A"/>
    <property type="match status" value="1"/>
</dbReference>
<dbReference type="InterPro" id="IPR017850">
    <property type="entry name" value="Alkaline_phosphatase_core_sf"/>
</dbReference>
<dbReference type="InterPro" id="IPR002591">
    <property type="entry name" value="Phosphodiest/P_Trfase"/>
</dbReference>
<dbReference type="InterPro" id="IPR037674">
    <property type="entry name" value="PIG-G_N"/>
</dbReference>
<dbReference type="InterPro" id="IPR039527">
    <property type="entry name" value="PIGG/GPI7"/>
</dbReference>
<dbReference type="InterPro" id="IPR045687">
    <property type="entry name" value="PIGG/GPI7_C"/>
</dbReference>
<dbReference type="PANTHER" id="PTHR23072:SF0">
    <property type="entry name" value="GPI ETHANOLAMINE PHOSPHATE TRANSFERASE 2"/>
    <property type="match status" value="1"/>
</dbReference>
<dbReference type="PANTHER" id="PTHR23072">
    <property type="entry name" value="PHOSPHATIDYLINOSITOL GLYCAN-RELATED"/>
    <property type="match status" value="1"/>
</dbReference>
<dbReference type="Pfam" id="PF01663">
    <property type="entry name" value="Phosphodiest"/>
    <property type="match status" value="1"/>
</dbReference>
<dbReference type="Pfam" id="PF19316">
    <property type="entry name" value="PIGO_PIGG"/>
    <property type="match status" value="1"/>
</dbReference>
<dbReference type="SUPFAM" id="SSF53649">
    <property type="entry name" value="Alkaline phosphatase-like"/>
    <property type="match status" value="1"/>
</dbReference>
<proteinExistence type="inferred from homology"/>